<dbReference type="EC" id="3.6.1.23" evidence="1"/>
<dbReference type="EMBL" id="CP000086">
    <property type="protein sequence ID" value="ABC36324.1"/>
    <property type="molecule type" value="Genomic_DNA"/>
</dbReference>
<dbReference type="RefSeq" id="WP_009892605.1">
    <property type="nucleotide sequence ID" value="NZ_CP008785.1"/>
</dbReference>
<dbReference type="PDB" id="4LHR">
    <property type="method" value="X-ray"/>
    <property type="resolution" value="1.50 A"/>
    <property type="chains" value="A=1-148"/>
</dbReference>
<dbReference type="PDBsum" id="4LHR"/>
<dbReference type="SMR" id="Q2T0H6"/>
<dbReference type="GeneID" id="45120526"/>
<dbReference type="KEGG" id="bte:BTH_I0767"/>
<dbReference type="HOGENOM" id="CLU_068508_1_1_4"/>
<dbReference type="UniPathway" id="UPA00610">
    <property type="reaction ID" value="UER00666"/>
</dbReference>
<dbReference type="EvolutionaryTrace" id="Q2T0H6"/>
<dbReference type="Proteomes" id="UP000001930">
    <property type="component" value="Chromosome I"/>
</dbReference>
<dbReference type="GO" id="GO:0004170">
    <property type="term" value="F:dUTP diphosphatase activity"/>
    <property type="evidence" value="ECO:0007669"/>
    <property type="project" value="UniProtKB-UniRule"/>
</dbReference>
<dbReference type="GO" id="GO:0000287">
    <property type="term" value="F:magnesium ion binding"/>
    <property type="evidence" value="ECO:0007669"/>
    <property type="project" value="UniProtKB-UniRule"/>
</dbReference>
<dbReference type="GO" id="GO:0006226">
    <property type="term" value="P:dUMP biosynthetic process"/>
    <property type="evidence" value="ECO:0007669"/>
    <property type="project" value="UniProtKB-UniRule"/>
</dbReference>
<dbReference type="GO" id="GO:0046081">
    <property type="term" value="P:dUTP catabolic process"/>
    <property type="evidence" value="ECO:0007669"/>
    <property type="project" value="InterPro"/>
</dbReference>
<dbReference type="CDD" id="cd07557">
    <property type="entry name" value="trimeric_dUTPase"/>
    <property type="match status" value="1"/>
</dbReference>
<dbReference type="FunFam" id="2.70.40.10:FF:000002">
    <property type="entry name" value="dUTP diphosphatase"/>
    <property type="match status" value="1"/>
</dbReference>
<dbReference type="Gene3D" id="2.70.40.10">
    <property type="match status" value="1"/>
</dbReference>
<dbReference type="HAMAP" id="MF_00116">
    <property type="entry name" value="dUTPase_bact"/>
    <property type="match status" value="1"/>
</dbReference>
<dbReference type="InterPro" id="IPR008181">
    <property type="entry name" value="dUTPase"/>
</dbReference>
<dbReference type="InterPro" id="IPR029054">
    <property type="entry name" value="dUTPase-like"/>
</dbReference>
<dbReference type="InterPro" id="IPR036157">
    <property type="entry name" value="dUTPase-like_sf"/>
</dbReference>
<dbReference type="InterPro" id="IPR033704">
    <property type="entry name" value="dUTPase_trimeric"/>
</dbReference>
<dbReference type="NCBIfam" id="TIGR00576">
    <property type="entry name" value="dut"/>
    <property type="match status" value="1"/>
</dbReference>
<dbReference type="NCBIfam" id="NF001862">
    <property type="entry name" value="PRK00601.1"/>
    <property type="match status" value="1"/>
</dbReference>
<dbReference type="PANTHER" id="PTHR11241">
    <property type="entry name" value="DEOXYURIDINE 5'-TRIPHOSPHATE NUCLEOTIDOHYDROLASE"/>
    <property type="match status" value="1"/>
</dbReference>
<dbReference type="PANTHER" id="PTHR11241:SF0">
    <property type="entry name" value="DEOXYURIDINE 5'-TRIPHOSPHATE NUCLEOTIDOHYDROLASE"/>
    <property type="match status" value="1"/>
</dbReference>
<dbReference type="Pfam" id="PF00692">
    <property type="entry name" value="dUTPase"/>
    <property type="match status" value="1"/>
</dbReference>
<dbReference type="SUPFAM" id="SSF51283">
    <property type="entry name" value="dUTPase-like"/>
    <property type="match status" value="1"/>
</dbReference>
<evidence type="ECO:0000255" key="1">
    <source>
        <dbReference type="HAMAP-Rule" id="MF_00116"/>
    </source>
</evidence>
<evidence type="ECO:0007829" key="2">
    <source>
        <dbReference type="PDB" id="4LHR"/>
    </source>
</evidence>
<reference key="1">
    <citation type="journal article" date="2005" name="BMC Genomics">
        <title>Bacterial genome adaptation to niches: divergence of the potential virulence genes in three Burkholderia species of different survival strategies.</title>
        <authorList>
            <person name="Kim H.S."/>
            <person name="Schell M.A."/>
            <person name="Yu Y."/>
            <person name="Ulrich R.L."/>
            <person name="Sarria S.H."/>
            <person name="Nierman W.C."/>
            <person name="DeShazer D."/>
        </authorList>
    </citation>
    <scope>NUCLEOTIDE SEQUENCE [LARGE SCALE GENOMIC DNA]</scope>
    <source>
        <strain>ATCC 700388 / DSM 13276 / CCUG 48851 / CIP 106301 / E264</strain>
    </source>
</reference>
<proteinExistence type="evidence at protein level"/>
<name>DUT_BURTA</name>
<protein>
    <recommendedName>
        <fullName evidence="1">Deoxyuridine 5'-triphosphate nucleotidohydrolase</fullName>
        <shortName evidence="1">dUTPase</shortName>
        <ecNumber evidence="1">3.6.1.23</ecNumber>
    </recommendedName>
    <alternativeName>
        <fullName evidence="1">dUTP pyrophosphatase</fullName>
    </alternativeName>
</protein>
<accession>Q2T0H6</accession>
<comment type="function">
    <text evidence="1">This enzyme is involved in nucleotide metabolism: it produces dUMP, the immediate precursor of thymidine nucleotides and it decreases the intracellular concentration of dUTP so that uracil cannot be incorporated into DNA.</text>
</comment>
<comment type="catalytic activity">
    <reaction evidence="1">
        <text>dUTP + H2O = dUMP + diphosphate + H(+)</text>
        <dbReference type="Rhea" id="RHEA:10248"/>
        <dbReference type="ChEBI" id="CHEBI:15377"/>
        <dbReference type="ChEBI" id="CHEBI:15378"/>
        <dbReference type="ChEBI" id="CHEBI:33019"/>
        <dbReference type="ChEBI" id="CHEBI:61555"/>
        <dbReference type="ChEBI" id="CHEBI:246422"/>
        <dbReference type="EC" id="3.6.1.23"/>
    </reaction>
</comment>
<comment type="cofactor">
    <cofactor evidence="1">
        <name>Mg(2+)</name>
        <dbReference type="ChEBI" id="CHEBI:18420"/>
    </cofactor>
</comment>
<comment type="pathway">
    <text evidence="1">Pyrimidine metabolism; dUMP biosynthesis; dUMP from dCTP (dUTP route): step 2/2.</text>
</comment>
<comment type="similarity">
    <text evidence="1">Belongs to the dUTPase family.</text>
</comment>
<gene>
    <name evidence="1" type="primary">dut</name>
    <name type="ordered locus">BTH_I0767</name>
</gene>
<sequence>MKLDLKILDARMRDYLPKYATTGSAGLDLRACLDAPVTLKPGDTALVPTGLAIHLADPGYAALILPRSGLGHKHGIVLGNLVGLIDSDYQGELMISTWNRGQTEFVLNPFERLAQLVIVPVVQATFNIVGDFAQSDRGAGGFGSTGRH</sequence>
<feature type="chain" id="PRO_1000015457" description="Deoxyuridine 5'-triphosphate nucleotidohydrolase">
    <location>
        <begin position="1"/>
        <end position="148"/>
    </location>
</feature>
<feature type="binding site" evidence="1">
    <location>
        <begin position="67"/>
        <end position="69"/>
    </location>
    <ligand>
        <name>substrate</name>
    </ligand>
</feature>
<feature type="binding site" evidence="1">
    <location>
        <position position="80"/>
    </location>
    <ligand>
        <name>substrate</name>
    </ligand>
</feature>
<feature type="binding site" evidence="1">
    <location>
        <begin position="84"/>
        <end position="86"/>
    </location>
    <ligand>
        <name>substrate</name>
    </ligand>
</feature>
<feature type="binding site" evidence="1">
    <location>
        <position position="94"/>
    </location>
    <ligand>
        <name>substrate</name>
    </ligand>
</feature>
<feature type="strand" evidence="2">
    <location>
        <begin position="4"/>
        <end position="9"/>
    </location>
</feature>
<feature type="helix" evidence="2">
    <location>
        <begin position="10"/>
        <end position="14"/>
    </location>
</feature>
<feature type="strand" evidence="2">
    <location>
        <begin position="27"/>
        <end position="30"/>
    </location>
</feature>
<feature type="strand" evidence="2">
    <location>
        <begin position="37"/>
        <end position="39"/>
    </location>
</feature>
<feature type="strand" evidence="2">
    <location>
        <begin position="44"/>
        <end position="54"/>
    </location>
</feature>
<feature type="strand" evidence="2">
    <location>
        <begin position="60"/>
        <end position="66"/>
    </location>
</feature>
<feature type="helix" evidence="2">
    <location>
        <begin position="68"/>
        <end position="74"/>
    </location>
</feature>
<feature type="strand" evidence="2">
    <location>
        <begin position="76"/>
        <end position="78"/>
    </location>
</feature>
<feature type="strand" evidence="2">
    <location>
        <begin position="81"/>
        <end position="85"/>
    </location>
</feature>
<feature type="strand" evidence="2">
    <location>
        <begin position="91"/>
        <end position="99"/>
    </location>
</feature>
<feature type="strand" evidence="2">
    <location>
        <begin position="101"/>
        <end position="103"/>
    </location>
</feature>
<feature type="strand" evidence="2">
    <location>
        <begin position="105"/>
        <end position="107"/>
    </location>
</feature>
<feature type="strand" evidence="2">
    <location>
        <begin position="112"/>
        <end position="120"/>
    </location>
</feature>
<keyword id="KW-0002">3D-structure</keyword>
<keyword id="KW-0378">Hydrolase</keyword>
<keyword id="KW-0460">Magnesium</keyword>
<keyword id="KW-0479">Metal-binding</keyword>
<keyword id="KW-0546">Nucleotide metabolism</keyword>
<organism>
    <name type="scientific">Burkholderia thailandensis (strain ATCC 700388 / DSM 13276 / CCUG 48851 / CIP 106301 / E264)</name>
    <dbReference type="NCBI Taxonomy" id="271848"/>
    <lineage>
        <taxon>Bacteria</taxon>
        <taxon>Pseudomonadati</taxon>
        <taxon>Pseudomonadota</taxon>
        <taxon>Betaproteobacteria</taxon>
        <taxon>Burkholderiales</taxon>
        <taxon>Burkholderiaceae</taxon>
        <taxon>Burkholderia</taxon>
        <taxon>pseudomallei group</taxon>
    </lineage>
</organism>